<dbReference type="EMBL" id="U33057">
    <property type="protein sequence ID" value="AAB64973.1"/>
    <property type="molecule type" value="Genomic_DNA"/>
</dbReference>
<dbReference type="EMBL" id="BK006938">
    <property type="protein sequence ID" value="DAA12365.1"/>
    <property type="molecule type" value="Genomic_DNA"/>
</dbReference>
<dbReference type="PIR" id="S69589">
    <property type="entry name" value="S69589"/>
</dbReference>
<dbReference type="RefSeq" id="NP_010823.1">
    <property type="nucleotide sequence ID" value="NM_001180842.1"/>
</dbReference>
<dbReference type="BioGRID" id="32583">
    <property type="interactions" value="65"/>
</dbReference>
<dbReference type="DIP" id="DIP-5274N"/>
<dbReference type="FunCoup" id="Q04433">
    <property type="interactions" value="46"/>
</dbReference>
<dbReference type="IntAct" id="Q04433">
    <property type="interactions" value="1"/>
</dbReference>
<dbReference type="STRING" id="4932.YDR534C"/>
<dbReference type="GlyCosmos" id="Q04433">
    <property type="glycosylation" value="3 sites, No reported glycans"/>
</dbReference>
<dbReference type="GlyGen" id="Q04433">
    <property type="glycosylation" value="3 sites"/>
</dbReference>
<dbReference type="PaxDb" id="4932-YDR534C"/>
<dbReference type="PeptideAtlas" id="Q04433"/>
<dbReference type="EnsemblFungi" id="YDR534C_mRNA">
    <property type="protein sequence ID" value="YDR534C"/>
    <property type="gene ID" value="YDR534C"/>
</dbReference>
<dbReference type="GeneID" id="852147"/>
<dbReference type="KEGG" id="sce:YDR534C"/>
<dbReference type="AGR" id="SGD:S000002942"/>
<dbReference type="SGD" id="S000002942">
    <property type="gene designation" value="FIT1"/>
</dbReference>
<dbReference type="VEuPathDB" id="FungiDB:YDR534C"/>
<dbReference type="eggNOG" id="ENOG502T53S">
    <property type="taxonomic scope" value="Eukaryota"/>
</dbReference>
<dbReference type="GeneTree" id="ENSGT00940000176726"/>
<dbReference type="HOGENOM" id="CLU_597455_0_0_1"/>
<dbReference type="InParanoid" id="Q04433"/>
<dbReference type="OMA" id="THESNNW"/>
<dbReference type="OrthoDB" id="4070661at2759"/>
<dbReference type="BioCyc" id="YEAST:G3O-30045-MONOMER"/>
<dbReference type="BioGRID-ORCS" id="852147">
    <property type="hits" value="0 hits in 10 CRISPR screens"/>
</dbReference>
<dbReference type="PRO" id="PR:Q04433"/>
<dbReference type="Proteomes" id="UP000002311">
    <property type="component" value="Chromosome IV"/>
</dbReference>
<dbReference type="RNAct" id="Q04433">
    <property type="molecule type" value="protein"/>
</dbReference>
<dbReference type="GO" id="GO:0071944">
    <property type="term" value="C:cell periphery"/>
    <property type="evidence" value="ECO:0007005"/>
    <property type="project" value="SGD"/>
</dbReference>
<dbReference type="GO" id="GO:0005576">
    <property type="term" value="C:extracellular region"/>
    <property type="evidence" value="ECO:0007669"/>
    <property type="project" value="UniProtKB-KW"/>
</dbReference>
<dbReference type="GO" id="GO:0009277">
    <property type="term" value="C:fungal-type cell wall"/>
    <property type="evidence" value="ECO:0000314"/>
    <property type="project" value="SGD"/>
</dbReference>
<dbReference type="GO" id="GO:0098552">
    <property type="term" value="C:side of membrane"/>
    <property type="evidence" value="ECO:0007669"/>
    <property type="project" value="UniProtKB-KW"/>
</dbReference>
<dbReference type="GO" id="GO:0005524">
    <property type="term" value="F:ATP binding"/>
    <property type="evidence" value="ECO:0007669"/>
    <property type="project" value="UniProtKB-KW"/>
</dbReference>
<dbReference type="GO" id="GO:0015891">
    <property type="term" value="P:siderophore transport"/>
    <property type="evidence" value="ECO:0000314"/>
    <property type="project" value="SGD"/>
</dbReference>
<protein>
    <recommendedName>
        <fullName>Facilitator of iron transport 1</fullName>
    </recommendedName>
</protein>
<accession>Q04433</accession>
<accession>D6VTF5</accession>
<feature type="signal peptide" evidence="1">
    <location>
        <begin position="1"/>
        <end position="18"/>
    </location>
</feature>
<feature type="chain" id="PRO_0000021265" description="Facilitator of iron transport 1">
    <location>
        <begin position="19"/>
        <end position="506"/>
    </location>
</feature>
<feature type="propeptide" id="PRO_0000021266" description="Removed in mature form" evidence="1">
    <location>
        <begin position="507"/>
        <end position="528"/>
    </location>
</feature>
<feature type="repeat" description="1-1" evidence="4">
    <location>
        <begin position="20"/>
        <end position="98"/>
    </location>
</feature>
<feature type="repeat" description="1-2" evidence="4">
    <location>
        <begin position="99"/>
        <end position="168"/>
    </location>
</feature>
<feature type="repeat" description="1-3" evidence="4">
    <location>
        <begin position="169"/>
        <end position="233"/>
    </location>
</feature>
<feature type="repeat" description="1-4; truncated" evidence="4">
    <location>
        <begin position="234"/>
        <end position="274"/>
    </location>
</feature>
<feature type="repeat" description="2-1" evidence="4">
    <location>
        <begin position="289"/>
        <end position="294"/>
    </location>
</feature>
<feature type="repeat" description="2-2" evidence="4">
    <location>
        <begin position="295"/>
        <end position="300"/>
    </location>
</feature>
<feature type="repeat" description="2-3" evidence="4">
    <location>
        <begin position="301"/>
        <end position="306"/>
    </location>
</feature>
<feature type="repeat" description="2-4" evidence="4">
    <location>
        <begin position="307"/>
        <end position="312"/>
    </location>
</feature>
<feature type="repeat" description="2-5" evidence="4">
    <location>
        <begin position="313"/>
        <end position="318"/>
    </location>
</feature>
<feature type="repeat" description="2-6" evidence="4">
    <location>
        <begin position="319"/>
        <end position="324"/>
    </location>
</feature>
<feature type="repeat" description="2-7" evidence="4">
    <location>
        <begin position="325"/>
        <end position="330"/>
    </location>
</feature>
<feature type="repeat" description="2-8" evidence="4">
    <location>
        <begin position="331"/>
        <end position="336"/>
    </location>
</feature>
<feature type="repeat" description="2-9" evidence="4">
    <location>
        <begin position="337"/>
        <end position="342"/>
    </location>
</feature>
<feature type="repeat" description="2-10" evidence="4">
    <location>
        <begin position="343"/>
        <end position="348"/>
    </location>
</feature>
<feature type="repeat" description="2-11" evidence="4">
    <location>
        <begin position="349"/>
        <end position="353"/>
    </location>
</feature>
<feature type="repeat" description="2-12" evidence="4">
    <location>
        <begin position="354"/>
        <end position="359"/>
    </location>
</feature>
<feature type="region of interest" description="4 X approximate tandem repeats">
    <location>
        <begin position="20"/>
        <end position="274"/>
    </location>
</feature>
<feature type="region of interest" description="Disordered" evidence="2">
    <location>
        <begin position="79"/>
        <end position="100"/>
    </location>
</feature>
<feature type="region of interest" description="Disordered" evidence="2">
    <location>
        <begin position="145"/>
        <end position="172"/>
    </location>
</feature>
<feature type="region of interest" description="Disordered" evidence="2">
    <location>
        <begin position="214"/>
        <end position="234"/>
    </location>
</feature>
<feature type="region of interest" description="12 X 6 AA approximate tandem repeats, Ser/Thr-rich">
    <location>
        <begin position="289"/>
        <end position="359"/>
    </location>
</feature>
<feature type="region of interest" description="Disordered" evidence="2">
    <location>
        <begin position="298"/>
        <end position="471"/>
    </location>
</feature>
<feature type="compositionally biased region" description="Polar residues" evidence="2">
    <location>
        <begin position="81"/>
        <end position="93"/>
    </location>
</feature>
<feature type="compositionally biased region" description="Polar residues" evidence="2">
    <location>
        <begin position="145"/>
        <end position="163"/>
    </location>
</feature>
<feature type="compositionally biased region" description="Low complexity" evidence="2">
    <location>
        <begin position="298"/>
        <end position="388"/>
    </location>
</feature>
<feature type="compositionally biased region" description="Low complexity" evidence="2">
    <location>
        <begin position="398"/>
        <end position="435"/>
    </location>
</feature>
<feature type="compositionally biased region" description="Polar residues" evidence="2">
    <location>
        <begin position="446"/>
        <end position="457"/>
    </location>
</feature>
<feature type="compositionally biased region" description="Low complexity" evidence="2">
    <location>
        <begin position="462"/>
        <end position="471"/>
    </location>
</feature>
<feature type="binding site" evidence="1">
    <location>
        <begin position="488"/>
        <end position="495"/>
    </location>
    <ligand>
        <name>ATP</name>
        <dbReference type="ChEBI" id="CHEBI:30616"/>
    </ligand>
</feature>
<feature type="lipid moiety-binding region" description="GPI-anchor amidated glycine" evidence="1">
    <location>
        <position position="506"/>
    </location>
</feature>
<feature type="glycosylation site" description="N-linked (GlcNAc...) asparagine" evidence="1">
    <location>
        <position position="412"/>
    </location>
</feature>
<feature type="glycosylation site" description="N-linked (GlcNAc...) asparagine" evidence="1">
    <location>
        <position position="464"/>
    </location>
</feature>
<feature type="glycosylation site" description="N-linked (GlcNAc...) asparagine" evidence="1">
    <location>
        <position position="503"/>
    </location>
</feature>
<gene>
    <name type="primary">FIT1</name>
    <name type="ordered locus">YDR534C</name>
    <name type="ORF">D9719.37</name>
</gene>
<sequence length="528" mass="52490">MKLSSAFVLSAITVAALGESITTTITATKNGHVYTKTVTQDATFVWAGEGAAVTSAVTEASTVAATSAAAETSVAAETSIVEPSTSAQGTSADEGSGSSITTTITATKNGHVYTKTVTQDATFVWTGEGERAPASTVATVETSVAAETSVAEPSTSAQGTSADEGSGSSITTTITATKNGHVYTKTVTQDATFVWTGEGERAPVSTVATVETAASPVTSVAEPSASTDEGSGSSITTTITATKNGHVYTKTVTQDATFVWTGEGERAPASTVATSSISAIEIPSTTEASIVEASSAVETSSAAETSSAVETSSAVETSSAVETSSAAETSSAAETSSAVETSSAVEISSAVETSAVETSSSSSTIETTSVKSLSPTQTSLSSSVQASSPIETSSAAKTSSVVPTFSSTTTENSSNSKSTSAVVASTTTSSESSATIVTPTRIGQAYTESSSRDAQSVRTHESNNWSSSSSASTKMVSSITRVQTTTAGIFTNGKSSTTPQIVNYTGAADSIAAGTGLMGAALAAVIFL</sequence>
<name>FIT1_YEAST</name>
<proteinExistence type="evidence at transcript level"/>
<organism>
    <name type="scientific">Saccharomyces cerevisiae (strain ATCC 204508 / S288c)</name>
    <name type="common">Baker's yeast</name>
    <dbReference type="NCBI Taxonomy" id="559292"/>
    <lineage>
        <taxon>Eukaryota</taxon>
        <taxon>Fungi</taxon>
        <taxon>Dikarya</taxon>
        <taxon>Ascomycota</taxon>
        <taxon>Saccharomycotina</taxon>
        <taxon>Saccharomycetes</taxon>
        <taxon>Saccharomycetales</taxon>
        <taxon>Saccharomycetaceae</taxon>
        <taxon>Saccharomyces</taxon>
    </lineage>
</organism>
<keyword id="KW-0067">ATP-binding</keyword>
<keyword id="KW-0134">Cell wall</keyword>
<keyword id="KW-0325">Glycoprotein</keyword>
<keyword id="KW-0336">GPI-anchor</keyword>
<keyword id="KW-0406">Ion transport</keyword>
<keyword id="KW-0408">Iron</keyword>
<keyword id="KW-0410">Iron transport</keyword>
<keyword id="KW-0449">Lipoprotein</keyword>
<keyword id="KW-0472">Membrane</keyword>
<keyword id="KW-0547">Nucleotide-binding</keyword>
<keyword id="KW-1185">Reference proteome</keyword>
<keyword id="KW-0677">Repeat</keyword>
<keyword id="KW-0964">Secreted</keyword>
<keyword id="KW-0732">Signal</keyword>
<keyword id="KW-0813">Transport</keyword>
<evidence type="ECO:0000255" key="1"/>
<evidence type="ECO:0000256" key="2">
    <source>
        <dbReference type="SAM" id="MobiDB-lite"/>
    </source>
</evidence>
<evidence type="ECO:0000269" key="3">
    <source>
    </source>
</evidence>
<evidence type="ECO:0000269" key="4">
    <source>
    </source>
</evidence>
<comment type="function">
    <text evidence="3">Involved in the uptake of non-siderophore sources of iron and the siderophores ferrioxamine B and ferrichrome. Has a role in the retention of iron in the cell wall and periplasmic space.</text>
</comment>
<comment type="subcellular location">
    <subcellularLocation>
        <location>Secreted</location>
        <location>Cell wall</location>
    </subcellularLocation>
    <subcellularLocation>
        <location>Membrane</location>
        <topology>Lipid-anchor</topology>
        <topology>GPI-anchor</topology>
    </subcellularLocation>
    <text>Covalently-linked GPI-modified cell wall protein (GPI-CWP).</text>
</comment>
<comment type="induction">
    <text evidence="3">By iron.</text>
</comment>
<comment type="domain">
    <text>The number of the intragenic tandem repeats varies between different S.cerevisiae strains.</text>
</comment>
<comment type="PTM">
    <text>The GPI-anchor is attached to the protein in the endoplasmic reticulum and serves to target the protein to the cell surface. There, the glucosamine-inositol phospholipid moiety is cleaved off and the GPI-modified mannoprotein is covalently attached via its lipidless GPI glycan remnant to the 1,6-beta-glucan of the outer cell wall layer.</text>
</comment>
<reference key="1">
    <citation type="journal article" date="1997" name="Nature">
        <title>The nucleotide sequence of Saccharomyces cerevisiae chromosome IV.</title>
        <authorList>
            <person name="Jacq C."/>
            <person name="Alt-Moerbe J."/>
            <person name="Andre B."/>
            <person name="Arnold W."/>
            <person name="Bahr A."/>
            <person name="Ballesta J.P.G."/>
            <person name="Bargues M."/>
            <person name="Baron L."/>
            <person name="Becker A."/>
            <person name="Biteau N."/>
            <person name="Bloecker H."/>
            <person name="Blugeon C."/>
            <person name="Boskovic J."/>
            <person name="Brandt P."/>
            <person name="Brueckner M."/>
            <person name="Buitrago M.J."/>
            <person name="Coster F."/>
            <person name="Delaveau T."/>
            <person name="del Rey F."/>
            <person name="Dujon B."/>
            <person name="Eide L.G."/>
            <person name="Garcia-Cantalejo J.M."/>
            <person name="Goffeau A."/>
            <person name="Gomez-Peris A."/>
            <person name="Granotier C."/>
            <person name="Hanemann V."/>
            <person name="Hankeln T."/>
            <person name="Hoheisel J.D."/>
            <person name="Jaeger W."/>
            <person name="Jimenez A."/>
            <person name="Jonniaux J.-L."/>
            <person name="Kraemer C."/>
            <person name="Kuester H."/>
            <person name="Laamanen P."/>
            <person name="Legros Y."/>
            <person name="Louis E.J."/>
            <person name="Moeller-Rieker S."/>
            <person name="Monnet A."/>
            <person name="Moro M."/>
            <person name="Mueller-Auer S."/>
            <person name="Nussbaumer B."/>
            <person name="Paricio N."/>
            <person name="Paulin L."/>
            <person name="Perea J."/>
            <person name="Perez-Alonso M."/>
            <person name="Perez-Ortin J.E."/>
            <person name="Pohl T.M."/>
            <person name="Prydz H."/>
            <person name="Purnelle B."/>
            <person name="Rasmussen S.W."/>
            <person name="Remacha M.A."/>
            <person name="Revuelta J.L."/>
            <person name="Rieger M."/>
            <person name="Salom D."/>
            <person name="Saluz H.P."/>
            <person name="Saiz J.E."/>
            <person name="Saren A.-M."/>
            <person name="Schaefer M."/>
            <person name="Scharfe M."/>
            <person name="Schmidt E.R."/>
            <person name="Schneider C."/>
            <person name="Scholler P."/>
            <person name="Schwarz S."/>
            <person name="Soler-Mira A."/>
            <person name="Urrestarazu L.A."/>
            <person name="Verhasselt P."/>
            <person name="Vissers S."/>
            <person name="Voet M."/>
            <person name="Volckaert G."/>
            <person name="Wagner G."/>
            <person name="Wambutt R."/>
            <person name="Wedler E."/>
            <person name="Wedler H."/>
            <person name="Woelfl S."/>
            <person name="Harris D.E."/>
            <person name="Bowman S."/>
            <person name="Brown D."/>
            <person name="Churcher C.M."/>
            <person name="Connor R."/>
            <person name="Dedman K."/>
            <person name="Gentles S."/>
            <person name="Hamlin N."/>
            <person name="Hunt S."/>
            <person name="Jones L."/>
            <person name="McDonald S."/>
            <person name="Murphy L.D."/>
            <person name="Niblett D."/>
            <person name="Odell C."/>
            <person name="Oliver K."/>
            <person name="Rajandream M.A."/>
            <person name="Richards C."/>
            <person name="Shore L."/>
            <person name="Walsh S.V."/>
            <person name="Barrell B.G."/>
            <person name="Dietrich F.S."/>
            <person name="Mulligan J.T."/>
            <person name="Allen E."/>
            <person name="Araujo R."/>
            <person name="Aviles E."/>
            <person name="Berno A."/>
            <person name="Carpenter J."/>
            <person name="Chen E."/>
            <person name="Cherry J.M."/>
            <person name="Chung E."/>
            <person name="Duncan M."/>
            <person name="Hunicke-Smith S."/>
            <person name="Hyman R.W."/>
            <person name="Komp C."/>
            <person name="Lashkari D."/>
            <person name="Lew H."/>
            <person name="Lin D."/>
            <person name="Mosedale D."/>
            <person name="Nakahara K."/>
            <person name="Namath A."/>
            <person name="Oefner P."/>
            <person name="Oh C."/>
            <person name="Petel F.X."/>
            <person name="Roberts D."/>
            <person name="Schramm S."/>
            <person name="Schroeder M."/>
            <person name="Shogren T."/>
            <person name="Shroff N."/>
            <person name="Winant A."/>
            <person name="Yelton M.A."/>
            <person name="Botstein D."/>
            <person name="Davis R.W."/>
            <person name="Johnston M."/>
            <person name="Andrews S."/>
            <person name="Brinkman R."/>
            <person name="Cooper J."/>
            <person name="Ding H."/>
            <person name="Du Z."/>
            <person name="Favello A."/>
            <person name="Fulton L."/>
            <person name="Gattung S."/>
            <person name="Greco T."/>
            <person name="Hallsworth K."/>
            <person name="Hawkins J."/>
            <person name="Hillier L.W."/>
            <person name="Jier M."/>
            <person name="Johnson D."/>
            <person name="Johnston L."/>
            <person name="Kirsten J."/>
            <person name="Kucaba T."/>
            <person name="Langston Y."/>
            <person name="Latreille P."/>
            <person name="Le T."/>
            <person name="Mardis E."/>
            <person name="Menezes S."/>
            <person name="Miller N."/>
            <person name="Nhan M."/>
            <person name="Pauley A."/>
            <person name="Peluso D."/>
            <person name="Rifkin L."/>
            <person name="Riles L."/>
            <person name="Taich A."/>
            <person name="Trevaskis E."/>
            <person name="Vignati D."/>
            <person name="Wilcox L."/>
            <person name="Wohldman P."/>
            <person name="Vaudin M."/>
            <person name="Wilson R."/>
            <person name="Waterston R."/>
            <person name="Albermann K."/>
            <person name="Hani J."/>
            <person name="Heumann K."/>
            <person name="Kleine K."/>
            <person name="Mewes H.-W."/>
            <person name="Zollner A."/>
            <person name="Zaccaria P."/>
        </authorList>
    </citation>
    <scope>NUCLEOTIDE SEQUENCE [LARGE SCALE GENOMIC DNA]</scope>
    <source>
        <strain>ATCC 204508 / S288c</strain>
    </source>
</reference>
<reference key="2">
    <citation type="journal article" date="2014" name="G3 (Bethesda)">
        <title>The reference genome sequence of Saccharomyces cerevisiae: Then and now.</title>
        <authorList>
            <person name="Engel S.R."/>
            <person name="Dietrich F.S."/>
            <person name="Fisk D.G."/>
            <person name="Binkley G."/>
            <person name="Balakrishnan R."/>
            <person name="Costanzo M.C."/>
            <person name="Dwight S.S."/>
            <person name="Hitz B.C."/>
            <person name="Karra K."/>
            <person name="Nash R.S."/>
            <person name="Weng S."/>
            <person name="Wong E.D."/>
            <person name="Lloyd P."/>
            <person name="Skrzypek M.S."/>
            <person name="Miyasato S.R."/>
            <person name="Simison M."/>
            <person name="Cherry J.M."/>
        </authorList>
    </citation>
    <scope>GENOME REANNOTATION</scope>
    <source>
        <strain>ATCC 204508 / S288c</strain>
    </source>
</reference>
<reference key="3">
    <citation type="journal article" date="1998" name="Mol. Gen. Genet.">
        <title>Screening for glycosylphosphatidylinositol (GPI)-dependent cell wall proteins in Saccharomyces cerevisiae.</title>
        <authorList>
            <person name="Hamada K."/>
            <person name="Fukuchi S."/>
            <person name="Arisawa M."/>
            <person name="Baba M."/>
            <person name="Kitada K."/>
        </authorList>
    </citation>
    <scope>SUBCELLULAR LOCATION</scope>
</reference>
<reference key="4">
    <citation type="journal article" date="1999" name="J. Bacteriol.">
        <title>Amino acid residues in the omega-minus region participate in cellular localization of yeast glycosylphosphatidylinositol-attached proteins.</title>
        <authorList>
            <person name="Hamada K."/>
            <person name="Terashima H."/>
            <person name="Arisawa M."/>
            <person name="Yabuki N."/>
            <person name="Kitada K."/>
        </authorList>
    </citation>
    <scope>SUBCELLULAR LOCATION</scope>
</reference>
<reference key="5">
    <citation type="journal article" date="2001" name="J. Biol. Chem.">
        <title>Three cell wall mannoproteins facilitate the uptake of iron in Saccharomyces cerevisiae.</title>
        <authorList>
            <person name="Protchenko O."/>
            <person name="Ferea T."/>
            <person name="Rashford J."/>
            <person name="Tiedeman J."/>
            <person name="Brown P.O."/>
            <person name="Botstein D."/>
            <person name="Philpott C.C."/>
        </authorList>
    </citation>
    <scope>FUNCTION</scope>
    <scope>SUBCELLULAR LOCATION</scope>
    <scope>INDUCTION</scope>
</reference>
<reference key="6">
    <citation type="journal article" date="2005" name="Nat. Genet.">
        <title>Intragenic tandem repeats generate functional variability.</title>
        <authorList>
            <person name="Verstrepen K.J."/>
            <person name="Jansen A."/>
            <person name="Lewitter F."/>
            <person name="Fink G.R."/>
        </authorList>
    </citation>
    <scope>REPEATS</scope>
</reference>